<dbReference type="EMBL" id="CP001280">
    <property type="protein sequence ID" value="ACK51511.1"/>
    <property type="molecule type" value="Genomic_DNA"/>
</dbReference>
<dbReference type="RefSeq" id="WP_012591580.1">
    <property type="nucleotide sequence ID" value="NC_011666.1"/>
</dbReference>
<dbReference type="SMR" id="B8EQ21"/>
<dbReference type="STRING" id="395965.Msil_2588"/>
<dbReference type="KEGG" id="msl:Msil_2588"/>
<dbReference type="eggNOG" id="COG0445">
    <property type="taxonomic scope" value="Bacteria"/>
</dbReference>
<dbReference type="HOGENOM" id="CLU_007831_2_2_5"/>
<dbReference type="OrthoDB" id="9815560at2"/>
<dbReference type="Proteomes" id="UP000002257">
    <property type="component" value="Chromosome"/>
</dbReference>
<dbReference type="GO" id="GO:0005829">
    <property type="term" value="C:cytosol"/>
    <property type="evidence" value="ECO:0007669"/>
    <property type="project" value="TreeGrafter"/>
</dbReference>
<dbReference type="GO" id="GO:0050660">
    <property type="term" value="F:flavin adenine dinucleotide binding"/>
    <property type="evidence" value="ECO:0007669"/>
    <property type="project" value="UniProtKB-UniRule"/>
</dbReference>
<dbReference type="GO" id="GO:0030488">
    <property type="term" value="P:tRNA methylation"/>
    <property type="evidence" value="ECO:0007669"/>
    <property type="project" value="TreeGrafter"/>
</dbReference>
<dbReference type="GO" id="GO:0002098">
    <property type="term" value="P:tRNA wobble uridine modification"/>
    <property type="evidence" value="ECO:0007669"/>
    <property type="project" value="InterPro"/>
</dbReference>
<dbReference type="FunFam" id="3.50.50.60:FF:000082">
    <property type="entry name" value="protein MTO1 homolog, mitochondrial isoform X1"/>
    <property type="match status" value="1"/>
</dbReference>
<dbReference type="FunFam" id="3.50.50.60:FF:000002">
    <property type="entry name" value="tRNA uridine 5-carboxymethylaminomethyl modification enzyme MnmG"/>
    <property type="match status" value="1"/>
</dbReference>
<dbReference type="Gene3D" id="3.50.50.60">
    <property type="entry name" value="FAD/NAD(P)-binding domain"/>
    <property type="match status" value="2"/>
</dbReference>
<dbReference type="Gene3D" id="1.10.150.570">
    <property type="entry name" value="GidA associated domain, C-terminal subdomain"/>
    <property type="match status" value="1"/>
</dbReference>
<dbReference type="Gene3D" id="1.10.10.1800">
    <property type="entry name" value="tRNA uridine 5-carboxymethylaminomethyl modification enzyme MnmG/GidA"/>
    <property type="match status" value="1"/>
</dbReference>
<dbReference type="HAMAP" id="MF_00129">
    <property type="entry name" value="MnmG_GidA"/>
    <property type="match status" value="1"/>
</dbReference>
<dbReference type="InterPro" id="IPR036188">
    <property type="entry name" value="FAD/NAD-bd_sf"/>
</dbReference>
<dbReference type="InterPro" id="IPR049312">
    <property type="entry name" value="GIDA_C_N"/>
</dbReference>
<dbReference type="InterPro" id="IPR004416">
    <property type="entry name" value="MnmG"/>
</dbReference>
<dbReference type="InterPro" id="IPR002218">
    <property type="entry name" value="MnmG-rel"/>
</dbReference>
<dbReference type="InterPro" id="IPR020595">
    <property type="entry name" value="MnmG-rel_CS"/>
</dbReference>
<dbReference type="InterPro" id="IPR026904">
    <property type="entry name" value="MnmG_C"/>
</dbReference>
<dbReference type="InterPro" id="IPR047001">
    <property type="entry name" value="MnmG_C_subdom"/>
</dbReference>
<dbReference type="InterPro" id="IPR044920">
    <property type="entry name" value="MnmG_C_subdom_sf"/>
</dbReference>
<dbReference type="InterPro" id="IPR040131">
    <property type="entry name" value="MnmG_N"/>
</dbReference>
<dbReference type="NCBIfam" id="TIGR00136">
    <property type="entry name" value="mnmG_gidA"/>
    <property type="match status" value="1"/>
</dbReference>
<dbReference type="PANTHER" id="PTHR11806">
    <property type="entry name" value="GLUCOSE INHIBITED DIVISION PROTEIN A"/>
    <property type="match status" value="1"/>
</dbReference>
<dbReference type="PANTHER" id="PTHR11806:SF0">
    <property type="entry name" value="PROTEIN MTO1 HOMOLOG, MITOCHONDRIAL"/>
    <property type="match status" value="1"/>
</dbReference>
<dbReference type="Pfam" id="PF01134">
    <property type="entry name" value="GIDA"/>
    <property type="match status" value="1"/>
</dbReference>
<dbReference type="Pfam" id="PF21680">
    <property type="entry name" value="GIDA_C_1st"/>
    <property type="match status" value="1"/>
</dbReference>
<dbReference type="Pfam" id="PF13932">
    <property type="entry name" value="SAM_GIDA_C"/>
    <property type="match status" value="1"/>
</dbReference>
<dbReference type="SMART" id="SM01228">
    <property type="entry name" value="GIDA_assoc_3"/>
    <property type="match status" value="1"/>
</dbReference>
<dbReference type="SUPFAM" id="SSF51905">
    <property type="entry name" value="FAD/NAD(P)-binding domain"/>
    <property type="match status" value="1"/>
</dbReference>
<dbReference type="PROSITE" id="PS01280">
    <property type="entry name" value="GIDA_1"/>
    <property type="match status" value="1"/>
</dbReference>
<dbReference type="PROSITE" id="PS01281">
    <property type="entry name" value="GIDA_2"/>
    <property type="match status" value="1"/>
</dbReference>
<reference key="1">
    <citation type="journal article" date="2010" name="J. Bacteriol.">
        <title>Complete genome sequence of the aerobic facultative methanotroph Methylocella silvestris BL2.</title>
        <authorList>
            <person name="Chen Y."/>
            <person name="Crombie A."/>
            <person name="Rahman M.T."/>
            <person name="Dedysh S.N."/>
            <person name="Liesack W."/>
            <person name="Stott M.B."/>
            <person name="Alam M."/>
            <person name="Theisen A.R."/>
            <person name="Murrell J.C."/>
            <person name="Dunfield P.F."/>
        </authorList>
    </citation>
    <scope>NUCLEOTIDE SEQUENCE [LARGE SCALE GENOMIC DNA]</scope>
    <source>
        <strain>DSM 15510 / CIP 108128 / LMG 27833 / NCIMB 13906 / BL2</strain>
    </source>
</reference>
<keyword id="KW-0963">Cytoplasm</keyword>
<keyword id="KW-0274">FAD</keyword>
<keyword id="KW-0285">Flavoprotein</keyword>
<keyword id="KW-0520">NAD</keyword>
<keyword id="KW-1185">Reference proteome</keyword>
<keyword id="KW-0819">tRNA processing</keyword>
<comment type="function">
    <text evidence="1">NAD-binding protein involved in the addition of a carboxymethylaminomethyl (cmnm) group at the wobble position (U34) of certain tRNAs, forming tRNA-cmnm(5)s(2)U34.</text>
</comment>
<comment type="cofactor">
    <cofactor evidence="1">
        <name>FAD</name>
        <dbReference type="ChEBI" id="CHEBI:57692"/>
    </cofactor>
</comment>
<comment type="subunit">
    <text evidence="1">Homodimer. Heterotetramer of two MnmE and two MnmG subunits.</text>
</comment>
<comment type="subcellular location">
    <subcellularLocation>
        <location evidence="1">Cytoplasm</location>
    </subcellularLocation>
</comment>
<comment type="similarity">
    <text evidence="1">Belongs to the MnmG family.</text>
</comment>
<accession>B8EQ21</accession>
<proteinExistence type="inferred from homology"/>
<feature type="chain" id="PRO_1000122750" description="tRNA uridine 5-carboxymethylaminomethyl modification enzyme MnmG">
    <location>
        <begin position="1"/>
        <end position="620"/>
    </location>
</feature>
<feature type="binding site" evidence="1">
    <location>
        <begin position="11"/>
        <end position="16"/>
    </location>
    <ligand>
        <name>FAD</name>
        <dbReference type="ChEBI" id="CHEBI:57692"/>
    </ligand>
</feature>
<feature type="binding site" evidence="1">
    <location>
        <begin position="270"/>
        <end position="284"/>
    </location>
    <ligand>
        <name>NAD(+)</name>
        <dbReference type="ChEBI" id="CHEBI:57540"/>
    </ligand>
</feature>
<sequence length="620" mass="66575">MRVAFDVIVVGGGHAGCEAAAAAARMGAKTALLTHSRATIGIMSCNPAIGGLGKGHLVREIDALDGLMGRVADAAGIQFRVLNRAKGPAVRGPRAQADRALYRKAMRAALAETANLSIVEGEAADLRIENGEVTGIVTADGRALSCRAAVITTGTFLRGVIHRGKVTMAAGRIGENPAIRLGETLEARGFAMGRLKTGTPPRLDGKTIDWAGLDRQAPDPDPQPFSTLTASIVNPQIDCFITHTTVATHKVIRDNIGQSPVYSGAIGGRGPRYCPSIEDKVVRFEDRNSHQIFLEPEGLDDDTIYPNGISTSLPEEVQDAFLRTIPGLERVAVLQPGYAIEYDFIDPRELKSTLETKKLGGLFLAGQINGTTGYEEAAAQGLAAGLNAAARAGGGAPILFERSEAYLGVMIDDLVCRGVTEPYRMFTSRAEYRLSLRADNADQRLTGAGLKWGCIGMERSSAFRTKMAALQHARGLLEGFNLTPNEAAQHGLKINHDGVRRGAFELLALADTSLAKLQAIWPELREIEPSIAEQIEIDAKYAVYLDRQKRDIEAARRDEALLIPDSVDYDLLTGLSTEIRGRLRQIRPRSLAQASRIEGMTPVAMTLLAATVRRVGADSN</sequence>
<evidence type="ECO:0000255" key="1">
    <source>
        <dbReference type="HAMAP-Rule" id="MF_00129"/>
    </source>
</evidence>
<organism>
    <name type="scientific">Methylocella silvestris (strain DSM 15510 / CIP 108128 / LMG 27833 / NCIMB 13906 / BL2)</name>
    <dbReference type="NCBI Taxonomy" id="395965"/>
    <lineage>
        <taxon>Bacteria</taxon>
        <taxon>Pseudomonadati</taxon>
        <taxon>Pseudomonadota</taxon>
        <taxon>Alphaproteobacteria</taxon>
        <taxon>Hyphomicrobiales</taxon>
        <taxon>Beijerinckiaceae</taxon>
        <taxon>Methylocella</taxon>
    </lineage>
</organism>
<gene>
    <name evidence="1" type="primary">mnmG</name>
    <name evidence="1" type="synonym">gidA</name>
    <name type="ordered locus">Msil_2588</name>
</gene>
<name>MNMG_METSB</name>
<protein>
    <recommendedName>
        <fullName evidence="1">tRNA uridine 5-carboxymethylaminomethyl modification enzyme MnmG</fullName>
    </recommendedName>
    <alternativeName>
        <fullName evidence="1">Glucose-inhibited division protein A</fullName>
    </alternativeName>
</protein>